<protein>
    <recommendedName>
        <fullName evidence="1">Biosynthetic peptidoglycan transglycosylase</fullName>
        <ecNumber evidence="1">2.4.99.28</ecNumber>
    </recommendedName>
    <alternativeName>
        <fullName evidence="1">Glycan polymerase</fullName>
    </alternativeName>
    <alternativeName>
        <fullName evidence="1">Peptidoglycan glycosyltransferase MtgA</fullName>
        <shortName evidence="1">PGT</shortName>
    </alternativeName>
</protein>
<feature type="chain" id="PRO_0000083146" description="Biosynthetic peptidoglycan transglycosylase">
    <location>
        <begin position="1"/>
        <end position="225"/>
    </location>
</feature>
<feature type="transmembrane region" description="Helical" evidence="1">
    <location>
        <begin position="7"/>
        <end position="27"/>
    </location>
</feature>
<name>MTGA_VIBPA</name>
<evidence type="ECO:0000255" key="1">
    <source>
        <dbReference type="HAMAP-Rule" id="MF_00766"/>
    </source>
</evidence>
<accession>Q87FR1</accession>
<dbReference type="EC" id="2.4.99.28" evidence="1"/>
<dbReference type="EMBL" id="BA000032">
    <property type="protein sequence ID" value="BAC62960.1"/>
    <property type="molecule type" value="Genomic_DNA"/>
</dbReference>
<dbReference type="RefSeq" id="NP_801127.1">
    <property type="nucleotide sequence ID" value="NC_004605.1"/>
</dbReference>
<dbReference type="RefSeq" id="WP_005480120.1">
    <property type="nucleotide sequence ID" value="NC_004605.1"/>
</dbReference>
<dbReference type="SMR" id="Q87FR1"/>
<dbReference type="CAZy" id="GT51">
    <property type="family name" value="Glycosyltransferase Family 51"/>
</dbReference>
<dbReference type="GeneID" id="1192313"/>
<dbReference type="KEGG" id="vpa:VPA1617"/>
<dbReference type="PATRIC" id="fig|223926.6.peg.4537"/>
<dbReference type="eggNOG" id="COG0744">
    <property type="taxonomic scope" value="Bacteria"/>
</dbReference>
<dbReference type="HOGENOM" id="CLU_006354_1_1_6"/>
<dbReference type="UniPathway" id="UPA00219"/>
<dbReference type="Proteomes" id="UP000002493">
    <property type="component" value="Chromosome 2"/>
</dbReference>
<dbReference type="GO" id="GO:0009274">
    <property type="term" value="C:peptidoglycan-based cell wall"/>
    <property type="evidence" value="ECO:0007669"/>
    <property type="project" value="InterPro"/>
</dbReference>
<dbReference type="GO" id="GO:0005886">
    <property type="term" value="C:plasma membrane"/>
    <property type="evidence" value="ECO:0007669"/>
    <property type="project" value="UniProtKB-SubCell"/>
</dbReference>
<dbReference type="GO" id="GO:0016763">
    <property type="term" value="F:pentosyltransferase activity"/>
    <property type="evidence" value="ECO:0007669"/>
    <property type="project" value="InterPro"/>
</dbReference>
<dbReference type="GO" id="GO:0008955">
    <property type="term" value="F:peptidoglycan glycosyltransferase activity"/>
    <property type="evidence" value="ECO:0007669"/>
    <property type="project" value="UniProtKB-UniRule"/>
</dbReference>
<dbReference type="GO" id="GO:0071555">
    <property type="term" value="P:cell wall organization"/>
    <property type="evidence" value="ECO:0007669"/>
    <property type="project" value="UniProtKB-KW"/>
</dbReference>
<dbReference type="GO" id="GO:0009252">
    <property type="term" value="P:peptidoglycan biosynthetic process"/>
    <property type="evidence" value="ECO:0007669"/>
    <property type="project" value="UniProtKB-UniRule"/>
</dbReference>
<dbReference type="GO" id="GO:0008360">
    <property type="term" value="P:regulation of cell shape"/>
    <property type="evidence" value="ECO:0007669"/>
    <property type="project" value="UniProtKB-KW"/>
</dbReference>
<dbReference type="Gene3D" id="1.10.3810.10">
    <property type="entry name" value="Biosynthetic peptidoglycan transglycosylase-like"/>
    <property type="match status" value="1"/>
</dbReference>
<dbReference type="HAMAP" id="MF_00766">
    <property type="entry name" value="PGT_MtgA"/>
    <property type="match status" value="1"/>
</dbReference>
<dbReference type="InterPro" id="IPR001264">
    <property type="entry name" value="Glyco_trans_51"/>
</dbReference>
<dbReference type="InterPro" id="IPR023346">
    <property type="entry name" value="Lysozyme-like_dom_sf"/>
</dbReference>
<dbReference type="InterPro" id="IPR036950">
    <property type="entry name" value="PBP_transglycosylase"/>
</dbReference>
<dbReference type="InterPro" id="IPR011812">
    <property type="entry name" value="Pep_trsgly"/>
</dbReference>
<dbReference type="NCBIfam" id="TIGR02070">
    <property type="entry name" value="mono_pep_trsgly"/>
    <property type="match status" value="1"/>
</dbReference>
<dbReference type="PANTHER" id="PTHR30400:SF0">
    <property type="entry name" value="BIOSYNTHETIC PEPTIDOGLYCAN TRANSGLYCOSYLASE"/>
    <property type="match status" value="1"/>
</dbReference>
<dbReference type="PANTHER" id="PTHR30400">
    <property type="entry name" value="MONOFUNCTIONAL BIOSYNTHETIC PEPTIDOGLYCAN TRANSGLYCOSYLASE"/>
    <property type="match status" value="1"/>
</dbReference>
<dbReference type="Pfam" id="PF00912">
    <property type="entry name" value="Transgly"/>
    <property type="match status" value="1"/>
</dbReference>
<dbReference type="SUPFAM" id="SSF53955">
    <property type="entry name" value="Lysozyme-like"/>
    <property type="match status" value="1"/>
</dbReference>
<keyword id="KW-0997">Cell inner membrane</keyword>
<keyword id="KW-1003">Cell membrane</keyword>
<keyword id="KW-0133">Cell shape</keyword>
<keyword id="KW-0961">Cell wall biogenesis/degradation</keyword>
<keyword id="KW-0328">Glycosyltransferase</keyword>
<keyword id="KW-0472">Membrane</keyword>
<keyword id="KW-0573">Peptidoglycan synthesis</keyword>
<keyword id="KW-0808">Transferase</keyword>
<keyword id="KW-0812">Transmembrane</keyword>
<keyword id="KW-1133">Transmembrane helix</keyword>
<sequence length="225" mass="25629">MLKRLKSFLFKMVLILLIAPIVLVGVVKYVDPPIWGWKLSRIVAPPKNYPDSSQHEWVSLTRISKNMQLAVIATEDQKFPHHYGVDFESLFDVISEAGDHGPSRGASTITQQAAKNVFLFPSHSYVRKAYELYFALLMELMWSKERILEVYLNVVEFGPGIYGAEAAAQNYFGVSAKQLSKWQAARLAVVLPNPYRIKVYPQSDYTARRTRWAMNQMSNLGSVQL</sequence>
<reference key="1">
    <citation type="journal article" date="2003" name="Lancet">
        <title>Genome sequence of Vibrio parahaemolyticus: a pathogenic mechanism distinct from that of V. cholerae.</title>
        <authorList>
            <person name="Makino K."/>
            <person name="Oshima K."/>
            <person name="Kurokawa K."/>
            <person name="Yokoyama K."/>
            <person name="Uda T."/>
            <person name="Tagomori K."/>
            <person name="Iijima Y."/>
            <person name="Najima M."/>
            <person name="Nakano M."/>
            <person name="Yamashita A."/>
            <person name="Kubota Y."/>
            <person name="Kimura S."/>
            <person name="Yasunaga T."/>
            <person name="Honda T."/>
            <person name="Shinagawa H."/>
            <person name="Hattori M."/>
            <person name="Iida T."/>
        </authorList>
    </citation>
    <scope>NUCLEOTIDE SEQUENCE [LARGE SCALE GENOMIC DNA]</scope>
    <source>
        <strain>RIMD 2210633</strain>
    </source>
</reference>
<proteinExistence type="inferred from homology"/>
<gene>
    <name evidence="1" type="primary">mtgA</name>
    <name type="ordered locus">VPA1617</name>
</gene>
<organism>
    <name type="scientific">Vibrio parahaemolyticus serotype O3:K6 (strain RIMD 2210633)</name>
    <dbReference type="NCBI Taxonomy" id="223926"/>
    <lineage>
        <taxon>Bacteria</taxon>
        <taxon>Pseudomonadati</taxon>
        <taxon>Pseudomonadota</taxon>
        <taxon>Gammaproteobacteria</taxon>
        <taxon>Vibrionales</taxon>
        <taxon>Vibrionaceae</taxon>
        <taxon>Vibrio</taxon>
    </lineage>
</organism>
<comment type="function">
    <text evidence="1">Peptidoglycan polymerase that catalyzes glycan chain elongation from lipid-linked precursors.</text>
</comment>
<comment type="catalytic activity">
    <reaction evidence="1">
        <text>[GlcNAc-(1-&gt;4)-Mur2Ac(oyl-L-Ala-gamma-D-Glu-L-Lys-D-Ala-D-Ala)](n)-di-trans,octa-cis-undecaprenyl diphosphate + beta-D-GlcNAc-(1-&gt;4)-Mur2Ac(oyl-L-Ala-gamma-D-Glu-L-Lys-D-Ala-D-Ala)-di-trans,octa-cis-undecaprenyl diphosphate = [GlcNAc-(1-&gt;4)-Mur2Ac(oyl-L-Ala-gamma-D-Glu-L-Lys-D-Ala-D-Ala)](n+1)-di-trans,octa-cis-undecaprenyl diphosphate + di-trans,octa-cis-undecaprenyl diphosphate + H(+)</text>
        <dbReference type="Rhea" id="RHEA:23708"/>
        <dbReference type="Rhea" id="RHEA-COMP:9602"/>
        <dbReference type="Rhea" id="RHEA-COMP:9603"/>
        <dbReference type="ChEBI" id="CHEBI:15378"/>
        <dbReference type="ChEBI" id="CHEBI:58405"/>
        <dbReference type="ChEBI" id="CHEBI:60033"/>
        <dbReference type="ChEBI" id="CHEBI:78435"/>
        <dbReference type="EC" id="2.4.99.28"/>
    </reaction>
</comment>
<comment type="pathway">
    <text evidence="1">Cell wall biogenesis; peptidoglycan biosynthesis.</text>
</comment>
<comment type="subcellular location">
    <subcellularLocation>
        <location evidence="1">Cell inner membrane</location>
        <topology evidence="1">Single-pass membrane protein</topology>
    </subcellularLocation>
</comment>
<comment type="similarity">
    <text evidence="1">Belongs to the glycosyltransferase 51 family.</text>
</comment>